<dbReference type="EC" id="4.2.1.77" evidence="2"/>
<dbReference type="EMBL" id="AE017355">
    <property type="protein sequence ID" value="AAT62415.1"/>
    <property type="molecule type" value="Genomic_DNA"/>
</dbReference>
<dbReference type="RefSeq" id="WP_000868740.1">
    <property type="nucleotide sequence ID" value="NC_005957.1"/>
</dbReference>
<dbReference type="RefSeq" id="YP_035142.1">
    <property type="nucleotide sequence ID" value="NC_005957.1"/>
</dbReference>
<dbReference type="SMR" id="Q6HMS9"/>
<dbReference type="KEGG" id="btk:BT9727_0799"/>
<dbReference type="PATRIC" id="fig|281309.8.peg.835"/>
<dbReference type="HOGENOM" id="CLU_036729_0_0_9"/>
<dbReference type="SABIO-RK" id="Q6HMS9"/>
<dbReference type="Proteomes" id="UP000001301">
    <property type="component" value="Chromosome"/>
</dbReference>
<dbReference type="GO" id="GO:0047580">
    <property type="term" value="F:4-hydroxyproline epimerase activity"/>
    <property type="evidence" value="ECO:0007669"/>
    <property type="project" value="TreeGrafter"/>
</dbReference>
<dbReference type="GO" id="GO:0050346">
    <property type="term" value="F:trans-L-3-hydroxyproline dehydratase activity"/>
    <property type="evidence" value="ECO:0000314"/>
    <property type="project" value="CACAO"/>
</dbReference>
<dbReference type="FunFam" id="3.10.310.10:FF:000023">
    <property type="entry name" value="Proline racemase"/>
    <property type="match status" value="1"/>
</dbReference>
<dbReference type="Gene3D" id="3.10.310.10">
    <property type="entry name" value="Diaminopimelate Epimerase, Chain A, domain 1"/>
    <property type="match status" value="2"/>
</dbReference>
<dbReference type="InterPro" id="IPR008794">
    <property type="entry name" value="Pro_racemase_fam"/>
</dbReference>
<dbReference type="PANTHER" id="PTHR33442">
    <property type="entry name" value="TRANS-3-HYDROXY-L-PROLINE DEHYDRATASE"/>
    <property type="match status" value="1"/>
</dbReference>
<dbReference type="PANTHER" id="PTHR33442:SF1">
    <property type="entry name" value="TRANS-3-HYDROXY-L-PROLINE DEHYDRATASE"/>
    <property type="match status" value="1"/>
</dbReference>
<dbReference type="Pfam" id="PF05544">
    <property type="entry name" value="Pro_racemase"/>
    <property type="match status" value="1"/>
</dbReference>
<dbReference type="PIRSF" id="PIRSF029792">
    <property type="entry name" value="Pro_racemase"/>
    <property type="match status" value="1"/>
</dbReference>
<dbReference type="SFLD" id="SFLDS00028">
    <property type="entry name" value="Proline_Racemase"/>
    <property type="match status" value="1"/>
</dbReference>
<dbReference type="SUPFAM" id="SSF54506">
    <property type="entry name" value="Diaminopimelate epimerase-like"/>
    <property type="match status" value="1"/>
</dbReference>
<keyword id="KW-0456">Lyase</keyword>
<reference key="1">
    <citation type="journal article" date="2006" name="J. Bacteriol.">
        <title>Pathogenomic sequence analysis of Bacillus cereus and Bacillus thuringiensis isolates closely related to Bacillus anthracis.</title>
        <authorList>
            <person name="Han C.S."/>
            <person name="Xie G."/>
            <person name="Challacombe J.F."/>
            <person name="Altherr M.R."/>
            <person name="Bhotika S.S."/>
            <person name="Bruce D."/>
            <person name="Campbell C.S."/>
            <person name="Campbell M.L."/>
            <person name="Chen J."/>
            <person name="Chertkov O."/>
            <person name="Cleland C."/>
            <person name="Dimitrijevic M."/>
            <person name="Doggett N.A."/>
            <person name="Fawcett J.J."/>
            <person name="Glavina T."/>
            <person name="Goodwin L.A."/>
            <person name="Hill K.K."/>
            <person name="Hitchcock P."/>
            <person name="Jackson P.J."/>
            <person name="Keim P."/>
            <person name="Kewalramani A.R."/>
            <person name="Longmire J."/>
            <person name="Lucas S."/>
            <person name="Malfatti S."/>
            <person name="McMurry K."/>
            <person name="Meincke L.J."/>
            <person name="Misra M."/>
            <person name="Moseman B.L."/>
            <person name="Mundt M."/>
            <person name="Munk A.C."/>
            <person name="Okinaka R.T."/>
            <person name="Parson-Quintana B."/>
            <person name="Reilly L.P."/>
            <person name="Richardson P."/>
            <person name="Robinson D.L."/>
            <person name="Rubin E."/>
            <person name="Saunders E."/>
            <person name="Tapia R."/>
            <person name="Tesmer J.G."/>
            <person name="Thayer N."/>
            <person name="Thompson L.S."/>
            <person name="Tice H."/>
            <person name="Ticknor L.O."/>
            <person name="Wills P.L."/>
            <person name="Brettin T.S."/>
            <person name="Gilna P."/>
        </authorList>
    </citation>
    <scope>NUCLEOTIDE SEQUENCE [LARGE SCALE GENOMIC DNA]</scope>
    <source>
        <strain>97-27</strain>
    </source>
</reference>
<reference key="2">
    <citation type="journal article" date="2014" name="Elife">
        <title>Prediction and characterization of enzymatic activities guided by sequence similarity and genome neighborhood networks.</title>
        <authorList>
            <person name="Zhao S."/>
            <person name="Sakai A."/>
            <person name="Zhang X."/>
            <person name="Vetting M.W."/>
            <person name="Kumar R."/>
            <person name="Hillerich B."/>
            <person name="San Francisco B."/>
            <person name="Solbiati J."/>
            <person name="Steves A."/>
            <person name="Brown S."/>
            <person name="Akiva E."/>
            <person name="Barber A."/>
            <person name="Seidel R.D."/>
            <person name="Babbitt P.C."/>
            <person name="Almo S.C."/>
            <person name="Gerlt J.A."/>
            <person name="Jacobson M.P."/>
        </authorList>
    </citation>
    <scope>FUNCTION</scope>
    <scope>CATALYTIC ACTIVITY</scope>
    <scope>BIOPHYSICOCHEMICAL PROPERTIES</scope>
</reference>
<sequence>MKVSKVYTTIDAHVAGEPLRIITGGVPEIKGDTQLERRAYCMEHLDHLREVLMYEPRGHHGMYGCIITPPASAHADFGVLFMHNEGWSTMCGHGIIAVITVGIETGMFEVTGEKQNFIIDSPAGEVIAYAKYNGSEVESVSFENVPSFVYKKDVPIIIDDYEFQVDIAFGGAFYAVVDSKEFGLKVDFKDLSAIQMWGGKIKHYIESKMEVKHPLEEGLKGIYGVIFSDEPKGEDATLRNVTIFADGQVDRSPCGTGTSARIATLFEKDALQKGEIFVHECITDGKFEGEVLSVTAVDTYEAVVPKVTGHAFITGFHQFVVDPRDDLKRGFLLG</sequence>
<evidence type="ECO:0000250" key="1">
    <source>
        <dbReference type="UniProtKB" id="Q4KGU2"/>
    </source>
</evidence>
<evidence type="ECO:0000269" key="2">
    <source>
    </source>
</evidence>
<evidence type="ECO:0000303" key="3">
    <source>
    </source>
</evidence>
<evidence type="ECO:0000305" key="4"/>
<evidence type="ECO:0000305" key="5">
    <source>
    </source>
</evidence>
<evidence type="ECO:0000312" key="6">
    <source>
        <dbReference type="EMBL" id="AAT62415.1"/>
    </source>
</evidence>
<accession>Q6HMS9</accession>
<name>T3HPD_BACHK</name>
<protein>
    <recommendedName>
        <fullName evidence="3">Trans-3-hydroxy-L-proline dehydratase</fullName>
        <shortName>T3LHyp dehydratase</shortName>
        <shortName evidence="3">t3HypD</shortName>
        <ecNumber evidence="2">4.2.1.77</ecNumber>
    </recommendedName>
    <alternativeName>
        <fullName>Trans-L-3-hydroxyproline dehydratase</fullName>
    </alternativeName>
</protein>
<comment type="function">
    <text evidence="2 5">Catalyzes the dehydration of trans-3-hydroxy-L-proline (t3LHyp) to Delta(1)-pyrroline-2-carboxylate (Pyr2C). Is likely involved in a degradation pathway that converts t3LHyp to L-proline. Can also catalyze the epimerization of trans-4-hydroxy-L-proline (t4LHyp) to cis-4-hydroxy-D-proline (c4DHyp) in vitro. Displays no proline racemase activity.</text>
</comment>
<comment type="catalytic activity">
    <reaction evidence="2">
        <text>trans-3-hydroxy-L-proline = 1-pyrroline-2-carboxylate + H2O</text>
        <dbReference type="Rhea" id="RHEA:10320"/>
        <dbReference type="ChEBI" id="CHEBI:15377"/>
        <dbReference type="ChEBI" id="CHEBI:39785"/>
        <dbReference type="ChEBI" id="CHEBI:57938"/>
        <dbReference type="EC" id="4.2.1.77"/>
    </reaction>
</comment>
<comment type="biophysicochemical properties">
    <kinetics>
        <KM evidence="2">7.5 mM for trans-3-hydroxy-L-proline</KM>
        <text evidence="2">kcat is 23 sec(-1) for t3LHyp dehydration. kcat is 0.16 sec(-1) for t4LHyp epimerization. The reaction of t4LHyp epimerization is too slow to measure KM for t4LHyp.</text>
    </kinetics>
</comment>
<comment type="similarity">
    <text evidence="4">Belongs to the proline racemase family.</text>
</comment>
<proteinExistence type="evidence at protein level"/>
<gene>
    <name evidence="6" type="primary">prdF</name>
    <name evidence="6" type="ordered locus">BT9727_0799</name>
</gene>
<feature type="chain" id="PRO_0000432269" description="Trans-3-hydroxy-L-proline dehydratase">
    <location>
        <begin position="1"/>
        <end position="334"/>
    </location>
</feature>
<feature type="active site" description="Proton acceptor" evidence="1">
    <location>
        <position position="91"/>
    </location>
</feature>
<feature type="binding site" evidence="1">
    <location>
        <begin position="92"/>
        <end position="93"/>
    </location>
    <ligand>
        <name>substrate</name>
    </ligand>
</feature>
<feature type="binding site" evidence="1">
    <location>
        <position position="250"/>
    </location>
    <ligand>
        <name>substrate</name>
    </ligand>
</feature>
<feature type="binding site" evidence="1">
    <location>
        <begin position="255"/>
        <end position="256"/>
    </location>
    <ligand>
        <name>substrate</name>
    </ligand>
</feature>
<organism>
    <name type="scientific">Bacillus thuringiensis subsp. konkukian (strain 97-27)</name>
    <dbReference type="NCBI Taxonomy" id="281309"/>
    <lineage>
        <taxon>Bacteria</taxon>
        <taxon>Bacillati</taxon>
        <taxon>Bacillota</taxon>
        <taxon>Bacilli</taxon>
        <taxon>Bacillales</taxon>
        <taxon>Bacillaceae</taxon>
        <taxon>Bacillus</taxon>
        <taxon>Bacillus cereus group</taxon>
    </lineage>
</organism>